<reference key="1">
    <citation type="submission" date="2008-08" db="EMBL/GenBank/DDBJ databases">
        <title>Proteomic analysis of NCS-1 interacting proteins reveals novel signaling pathways required for inner ear development in Zebrafish.</title>
        <authorList>
            <person name="Petko J."/>
            <person name="Kabbani N."/>
            <person name="Woll M."/>
            <person name="Decotiis D."/>
            <person name="Frey C."/>
            <person name="Hickey K."/>
            <person name="Craig M."/>
            <person name="Canfield V."/>
            <person name="Levenson R."/>
        </authorList>
    </citation>
    <scope>NUCLEOTIDE SEQUENCE [MRNA]</scope>
</reference>
<reference key="2">
    <citation type="submission" date="2004-02" db="EMBL/GenBank/DDBJ databases">
        <authorList>
            <consortium name="NIH - Zebrafish Gene Collection (ZGC) project"/>
        </authorList>
    </citation>
    <scope>NUCLEOTIDE SEQUENCE [LARGE SCALE MRNA]</scope>
    <source>
        <tissue>Embryo</tissue>
    </source>
</reference>
<accession>Q6NZ13</accession>
<name>NBL1_DANRE</name>
<comment type="function">
    <text evidence="1">May act as a tumor suppressor.</text>
</comment>
<comment type="subcellular location">
    <subcellularLocation>
        <location evidence="1">Secreted</location>
    </subcellularLocation>
</comment>
<comment type="similarity">
    <text evidence="4">Belongs to the DAN family.</text>
</comment>
<feature type="signal peptide" evidence="2">
    <location>
        <begin position="1"/>
        <end position="19"/>
    </location>
</feature>
<feature type="chain" id="PRO_0000364338" description="Neuroblastoma suppressor of tumorigenicity 1">
    <location>
        <begin position="20"/>
        <end position="183"/>
    </location>
</feature>
<feature type="domain" description="CTCK">
    <location>
        <begin position="38"/>
        <end position="127"/>
    </location>
</feature>
<feature type="region of interest" description="Disordered" evidence="3">
    <location>
        <begin position="145"/>
        <end position="170"/>
    </location>
</feature>
<feature type="disulfide bond" evidence="1">
    <location>
        <begin position="38"/>
        <end position="88"/>
    </location>
</feature>
<feature type="disulfide bond" evidence="1">
    <location>
        <begin position="52"/>
        <end position="102"/>
    </location>
</feature>
<feature type="disulfide bond" evidence="1">
    <location>
        <begin position="62"/>
        <end position="121"/>
    </location>
</feature>
<feature type="disulfide bond" evidence="1">
    <location>
        <begin position="66"/>
        <end position="123"/>
    </location>
</feature>
<feature type="disulfide bond" evidence="1">
    <location>
        <begin position="85"/>
        <end position="126"/>
    </location>
</feature>
<proteinExistence type="evidence at transcript level"/>
<gene>
    <name type="primary">nbl1</name>
    <name type="ORF">zgc:77251</name>
</gene>
<evidence type="ECO:0000250" key="1"/>
<evidence type="ECO:0000255" key="2"/>
<evidence type="ECO:0000256" key="3">
    <source>
        <dbReference type="SAM" id="MobiDB-lite"/>
    </source>
</evidence>
<evidence type="ECO:0000305" key="4"/>
<dbReference type="EMBL" id="FJ032030">
    <property type="protein sequence ID" value="ACH92116.1"/>
    <property type="molecule type" value="mRNA"/>
</dbReference>
<dbReference type="EMBL" id="BC066387">
    <property type="protein sequence ID" value="AAH66387.1"/>
    <property type="molecule type" value="mRNA"/>
</dbReference>
<dbReference type="RefSeq" id="NP_996980.1">
    <property type="nucleotide sequence ID" value="NM_207097.1"/>
</dbReference>
<dbReference type="SMR" id="Q6NZ13"/>
<dbReference type="FunCoup" id="Q6NZ13">
    <property type="interactions" value="1238"/>
</dbReference>
<dbReference type="STRING" id="7955.ENSDARP00000138310"/>
<dbReference type="GeneID" id="404629"/>
<dbReference type="KEGG" id="dre:404629"/>
<dbReference type="AGR" id="ZFIN:ZDB-GENE-040426-2357"/>
<dbReference type="CTD" id="4681"/>
<dbReference type="ZFIN" id="ZDB-GENE-040426-2357">
    <property type="gene designation" value="nbl1"/>
</dbReference>
<dbReference type="InParanoid" id="Q6NZ13"/>
<dbReference type="OrthoDB" id="8196271at2759"/>
<dbReference type="PhylomeDB" id="Q6NZ13"/>
<dbReference type="PRO" id="PR:Q6NZ13"/>
<dbReference type="Proteomes" id="UP000000437">
    <property type="component" value="Chromosome 22"/>
</dbReference>
<dbReference type="GO" id="GO:0005615">
    <property type="term" value="C:extracellular space"/>
    <property type="evidence" value="ECO:0000318"/>
    <property type="project" value="GO_Central"/>
</dbReference>
<dbReference type="GO" id="GO:0036122">
    <property type="term" value="F:BMP binding"/>
    <property type="evidence" value="ECO:0000318"/>
    <property type="project" value="GO_Central"/>
</dbReference>
<dbReference type="GO" id="GO:0048018">
    <property type="term" value="F:receptor ligand activity"/>
    <property type="evidence" value="ECO:0000318"/>
    <property type="project" value="GO_Central"/>
</dbReference>
<dbReference type="GO" id="GO:0060872">
    <property type="term" value="P:semicircular canal development"/>
    <property type="evidence" value="ECO:0000315"/>
    <property type="project" value="ZFIN"/>
</dbReference>
<dbReference type="GO" id="GO:0060876">
    <property type="term" value="P:semicircular canal formation"/>
    <property type="evidence" value="ECO:0000315"/>
    <property type="project" value="ZFIN"/>
</dbReference>
<dbReference type="GO" id="GO:0038098">
    <property type="term" value="P:sequestering of BMP from receptor via BMP binding"/>
    <property type="evidence" value="ECO:0000318"/>
    <property type="project" value="GO_Central"/>
</dbReference>
<dbReference type="Gene3D" id="2.10.90.10">
    <property type="entry name" value="Cystine-knot cytokines"/>
    <property type="match status" value="1"/>
</dbReference>
<dbReference type="InterPro" id="IPR006207">
    <property type="entry name" value="Cys_knot_C"/>
</dbReference>
<dbReference type="InterPro" id="IPR029034">
    <property type="entry name" value="Cystine-knot_cytokine"/>
</dbReference>
<dbReference type="InterPro" id="IPR004133">
    <property type="entry name" value="DAN"/>
</dbReference>
<dbReference type="InterPro" id="IPR016728">
    <property type="entry name" value="Neuroblast_suppress_tumour_1"/>
</dbReference>
<dbReference type="PANTHER" id="PTHR15283">
    <property type="entry name" value="GREMLIN 1"/>
    <property type="match status" value="1"/>
</dbReference>
<dbReference type="PANTHER" id="PTHR15283:SF5">
    <property type="entry name" value="NEUROBLASTOMA SUPPRESSOR OF TUMORIGENICITY 1"/>
    <property type="match status" value="1"/>
</dbReference>
<dbReference type="Pfam" id="PF03045">
    <property type="entry name" value="DAN"/>
    <property type="match status" value="1"/>
</dbReference>
<dbReference type="PIRSF" id="PIRSF018557">
    <property type="entry name" value="DAN_sub"/>
    <property type="match status" value="1"/>
</dbReference>
<dbReference type="SMART" id="SM00041">
    <property type="entry name" value="CT"/>
    <property type="match status" value="1"/>
</dbReference>
<keyword id="KW-1015">Disulfide bond</keyword>
<keyword id="KW-1185">Reference proteome</keyword>
<keyword id="KW-0964">Secreted</keyword>
<keyword id="KW-0732">Signal</keyword>
<keyword id="KW-0043">Tumor suppressor</keyword>
<protein>
    <recommendedName>
        <fullName>Neuroblastoma suppressor of tumorigenicity 1</fullName>
    </recommendedName>
</protein>
<organism>
    <name type="scientific">Danio rerio</name>
    <name type="common">Zebrafish</name>
    <name type="synonym">Brachydanio rerio</name>
    <dbReference type="NCBI Taxonomy" id="7955"/>
    <lineage>
        <taxon>Eukaryota</taxon>
        <taxon>Metazoa</taxon>
        <taxon>Chordata</taxon>
        <taxon>Craniata</taxon>
        <taxon>Vertebrata</taxon>
        <taxon>Euteleostomi</taxon>
        <taxon>Actinopterygii</taxon>
        <taxon>Neopterygii</taxon>
        <taxon>Teleostei</taxon>
        <taxon>Ostariophysi</taxon>
        <taxon>Cypriniformes</taxon>
        <taxon>Danionidae</taxon>
        <taxon>Danioninae</taxon>
        <taxon>Danio</taxon>
    </lineage>
</organism>
<sequence length="183" mass="20037">MVMCVRAVLVCVLLELSRAAPHAHINRLALFPDKSAWCEAKNITQIVGHTGCTPRSIQNRACLGQCFSYSVPNTFPQSTESLVHCDSCMPAQTQWEVVTLDCSGSDEAPRVDKLVERILHCSCQSCSKESSQEGALLQLYPHEGAQDLPSLPDATHTHPQHAHMQADQRDADAHLDMHAPEAG</sequence>